<gene>
    <name evidence="1" type="primary">atpA</name>
    <name type="ordered locus">MHJ_0047</name>
</gene>
<proteinExistence type="inferred from homology"/>
<sequence length="507" mass="55700">MNKDINIAAIIKNEIENFEGKIQNHDIGKVIIVGDGVALVSGIEKVKFGELVEFENNVLGIALNLEQDLIGVVIMASENSVFQGSIVRRTKSVISITVGDQLLGRVVNALGIPIDGKAELDNSLKSAIFTNAPSIMDRKSVDRGLKTGILAIDSLVPIGKGQRELIIGDRQTGKTTIAIDAILNQKGKDVYCVYVAIGQKNSSVAQIVSLLEKKGALEYTTVILAGASELSPLQYLAPYSGAAIAEYWMNKKKDVLIIYDDLSKHAIAYRTLSLLLRRPPGREAFPGDIFYQHSYLLERSAQLSNDKGGGSITALPIIETQAGDISAYIPTNVISITDGQIFLRDSLFNSGQKPAIDIGLSVSRVGSAAQTNLMKWASSSLKLNLAQYNELKAFAQFGSDLGPSSQLILDRGNKIYEILKQENQYPLTERQQIMLLILIRENLIDSLEQKSIPLFKSAFLKYCDSEPKFRDKIEKMDYNRVLEPNNLAGILKDITDFIEKFNLGNVF</sequence>
<evidence type="ECO:0000255" key="1">
    <source>
        <dbReference type="HAMAP-Rule" id="MF_01346"/>
    </source>
</evidence>
<feature type="chain" id="PRO_0000238293" description="ATP synthase subunit alpha">
    <location>
        <begin position="1"/>
        <end position="507"/>
    </location>
</feature>
<feature type="binding site" evidence="1">
    <location>
        <begin position="168"/>
        <end position="175"/>
    </location>
    <ligand>
        <name>ATP</name>
        <dbReference type="ChEBI" id="CHEBI:30616"/>
    </ligand>
</feature>
<feature type="site" description="Required for activity" evidence="1">
    <location>
        <position position="361"/>
    </location>
</feature>
<dbReference type="EC" id="7.1.2.2" evidence="1"/>
<dbReference type="EMBL" id="AE017243">
    <property type="protein sequence ID" value="AAZ44141.2"/>
    <property type="molecule type" value="Genomic_DNA"/>
</dbReference>
<dbReference type="RefSeq" id="WP_044284573.1">
    <property type="nucleotide sequence ID" value="NC_007295.1"/>
</dbReference>
<dbReference type="SMR" id="Q4AAV9"/>
<dbReference type="GeneID" id="41334335"/>
<dbReference type="KEGG" id="mhj:MHJ_0047"/>
<dbReference type="eggNOG" id="COG0056">
    <property type="taxonomic scope" value="Bacteria"/>
</dbReference>
<dbReference type="HOGENOM" id="CLU_010091_2_1_14"/>
<dbReference type="OrthoDB" id="9803053at2"/>
<dbReference type="Proteomes" id="UP000000548">
    <property type="component" value="Chromosome"/>
</dbReference>
<dbReference type="GO" id="GO:0005886">
    <property type="term" value="C:plasma membrane"/>
    <property type="evidence" value="ECO:0007669"/>
    <property type="project" value="UniProtKB-SubCell"/>
</dbReference>
<dbReference type="GO" id="GO:0045259">
    <property type="term" value="C:proton-transporting ATP synthase complex"/>
    <property type="evidence" value="ECO:0007669"/>
    <property type="project" value="UniProtKB-KW"/>
</dbReference>
<dbReference type="GO" id="GO:0043531">
    <property type="term" value="F:ADP binding"/>
    <property type="evidence" value="ECO:0007669"/>
    <property type="project" value="TreeGrafter"/>
</dbReference>
<dbReference type="GO" id="GO:0005524">
    <property type="term" value="F:ATP binding"/>
    <property type="evidence" value="ECO:0007669"/>
    <property type="project" value="UniProtKB-UniRule"/>
</dbReference>
<dbReference type="GO" id="GO:0046933">
    <property type="term" value="F:proton-transporting ATP synthase activity, rotational mechanism"/>
    <property type="evidence" value="ECO:0007669"/>
    <property type="project" value="UniProtKB-UniRule"/>
</dbReference>
<dbReference type="CDD" id="cd18113">
    <property type="entry name" value="ATP-synt_F1_alpha_C"/>
    <property type="match status" value="1"/>
</dbReference>
<dbReference type="CDD" id="cd18116">
    <property type="entry name" value="ATP-synt_F1_alpha_N"/>
    <property type="match status" value="1"/>
</dbReference>
<dbReference type="CDD" id="cd01132">
    <property type="entry name" value="F1-ATPase_alpha_CD"/>
    <property type="match status" value="1"/>
</dbReference>
<dbReference type="FunFam" id="3.40.50.300:FF:000002">
    <property type="entry name" value="ATP synthase subunit alpha"/>
    <property type="match status" value="1"/>
</dbReference>
<dbReference type="Gene3D" id="2.40.30.20">
    <property type="match status" value="1"/>
</dbReference>
<dbReference type="Gene3D" id="1.20.150.20">
    <property type="entry name" value="ATP synthase alpha/beta chain, C-terminal domain"/>
    <property type="match status" value="1"/>
</dbReference>
<dbReference type="Gene3D" id="3.40.50.300">
    <property type="entry name" value="P-loop containing nucleotide triphosphate hydrolases"/>
    <property type="match status" value="1"/>
</dbReference>
<dbReference type="HAMAP" id="MF_01346">
    <property type="entry name" value="ATP_synth_alpha_bact"/>
    <property type="match status" value="1"/>
</dbReference>
<dbReference type="InterPro" id="IPR023366">
    <property type="entry name" value="ATP_synth_asu-like_sf"/>
</dbReference>
<dbReference type="InterPro" id="IPR000793">
    <property type="entry name" value="ATP_synth_asu_C"/>
</dbReference>
<dbReference type="InterPro" id="IPR038376">
    <property type="entry name" value="ATP_synth_asu_C_sf"/>
</dbReference>
<dbReference type="InterPro" id="IPR033732">
    <property type="entry name" value="ATP_synth_F1_a_nt-bd_dom"/>
</dbReference>
<dbReference type="InterPro" id="IPR005294">
    <property type="entry name" value="ATP_synth_F1_asu"/>
</dbReference>
<dbReference type="InterPro" id="IPR020003">
    <property type="entry name" value="ATPase_a/bsu_AS"/>
</dbReference>
<dbReference type="InterPro" id="IPR004100">
    <property type="entry name" value="ATPase_F1/V1/A1_a/bsu_N"/>
</dbReference>
<dbReference type="InterPro" id="IPR036121">
    <property type="entry name" value="ATPase_F1/V1/A1_a/bsu_N_sf"/>
</dbReference>
<dbReference type="InterPro" id="IPR000194">
    <property type="entry name" value="ATPase_F1/V1/A1_a/bsu_nucl-bd"/>
</dbReference>
<dbReference type="InterPro" id="IPR027417">
    <property type="entry name" value="P-loop_NTPase"/>
</dbReference>
<dbReference type="NCBIfam" id="TIGR00962">
    <property type="entry name" value="atpA"/>
    <property type="match status" value="1"/>
</dbReference>
<dbReference type="NCBIfam" id="NF009884">
    <property type="entry name" value="PRK13343.1"/>
    <property type="match status" value="1"/>
</dbReference>
<dbReference type="PANTHER" id="PTHR48082">
    <property type="entry name" value="ATP SYNTHASE SUBUNIT ALPHA, MITOCHONDRIAL"/>
    <property type="match status" value="1"/>
</dbReference>
<dbReference type="PANTHER" id="PTHR48082:SF2">
    <property type="entry name" value="ATP SYNTHASE SUBUNIT ALPHA, MITOCHONDRIAL"/>
    <property type="match status" value="1"/>
</dbReference>
<dbReference type="Pfam" id="PF00006">
    <property type="entry name" value="ATP-synt_ab"/>
    <property type="match status" value="1"/>
</dbReference>
<dbReference type="Pfam" id="PF00306">
    <property type="entry name" value="ATP-synt_ab_C"/>
    <property type="match status" value="1"/>
</dbReference>
<dbReference type="Pfam" id="PF02874">
    <property type="entry name" value="ATP-synt_ab_N"/>
    <property type="match status" value="1"/>
</dbReference>
<dbReference type="SUPFAM" id="SSF47917">
    <property type="entry name" value="C-terminal domain of alpha and beta subunits of F1 ATP synthase"/>
    <property type="match status" value="1"/>
</dbReference>
<dbReference type="SUPFAM" id="SSF50615">
    <property type="entry name" value="N-terminal domain of alpha and beta subunits of F1 ATP synthase"/>
    <property type="match status" value="1"/>
</dbReference>
<dbReference type="SUPFAM" id="SSF52540">
    <property type="entry name" value="P-loop containing nucleoside triphosphate hydrolases"/>
    <property type="match status" value="1"/>
</dbReference>
<dbReference type="PROSITE" id="PS00152">
    <property type="entry name" value="ATPASE_ALPHA_BETA"/>
    <property type="match status" value="1"/>
</dbReference>
<keyword id="KW-0066">ATP synthesis</keyword>
<keyword id="KW-0067">ATP-binding</keyword>
<keyword id="KW-1003">Cell membrane</keyword>
<keyword id="KW-0139">CF(1)</keyword>
<keyword id="KW-0375">Hydrogen ion transport</keyword>
<keyword id="KW-0406">Ion transport</keyword>
<keyword id="KW-0472">Membrane</keyword>
<keyword id="KW-0547">Nucleotide-binding</keyword>
<keyword id="KW-1278">Translocase</keyword>
<keyword id="KW-0813">Transport</keyword>
<organism>
    <name type="scientific">Mesomycoplasma hyopneumoniae (strain J / ATCC 25934 / NCTC 10110)</name>
    <name type="common">Mycoplasma hyopneumoniae</name>
    <dbReference type="NCBI Taxonomy" id="262719"/>
    <lineage>
        <taxon>Bacteria</taxon>
        <taxon>Bacillati</taxon>
        <taxon>Mycoplasmatota</taxon>
        <taxon>Mycoplasmoidales</taxon>
        <taxon>Metamycoplasmataceae</taxon>
        <taxon>Mesomycoplasma</taxon>
    </lineage>
</organism>
<comment type="function">
    <text evidence="1">Produces ATP from ADP in the presence of a proton gradient across the membrane. The alpha chain is a regulatory subunit.</text>
</comment>
<comment type="catalytic activity">
    <reaction evidence="1">
        <text>ATP + H2O + 4 H(+)(in) = ADP + phosphate + 5 H(+)(out)</text>
        <dbReference type="Rhea" id="RHEA:57720"/>
        <dbReference type="ChEBI" id="CHEBI:15377"/>
        <dbReference type="ChEBI" id="CHEBI:15378"/>
        <dbReference type="ChEBI" id="CHEBI:30616"/>
        <dbReference type="ChEBI" id="CHEBI:43474"/>
        <dbReference type="ChEBI" id="CHEBI:456216"/>
        <dbReference type="EC" id="7.1.2.2"/>
    </reaction>
</comment>
<comment type="subunit">
    <text evidence="1">F-type ATPases have 2 components, CF(1) - the catalytic core - and CF(0) - the membrane proton channel. CF(1) has five subunits: alpha(3), beta(3), gamma(1), delta(1), epsilon(1). CF(0) has three main subunits: a(1), b(2) and c(9-12). The alpha and beta chains form an alternating ring which encloses part of the gamma chain. CF(1) is attached to CF(0) by a central stalk formed by the gamma and epsilon chains, while a peripheral stalk is formed by the delta and b chains.</text>
</comment>
<comment type="subcellular location">
    <subcellularLocation>
        <location evidence="1">Cell membrane</location>
        <topology evidence="1">Peripheral membrane protein</topology>
    </subcellularLocation>
</comment>
<comment type="similarity">
    <text evidence="1">Belongs to the ATPase alpha/beta chains family.</text>
</comment>
<name>ATPA_MESHJ</name>
<reference key="1">
    <citation type="journal article" date="2005" name="J. Bacteriol.">
        <title>Swine and poultry pathogens: the complete genome sequences of two strains of Mycoplasma hyopneumoniae and a strain of Mycoplasma synoviae.</title>
        <authorList>
            <person name="Vasconcelos A.T.R."/>
            <person name="Ferreira H.B."/>
            <person name="Bizarro C.V."/>
            <person name="Bonatto S.L."/>
            <person name="Carvalho M.O."/>
            <person name="Pinto P.M."/>
            <person name="Almeida D.F."/>
            <person name="Almeida L.G.P."/>
            <person name="Almeida R."/>
            <person name="Alves-Junior L."/>
            <person name="Assuncao E.N."/>
            <person name="Azevedo V.A.C."/>
            <person name="Bogo M.R."/>
            <person name="Brigido M.M."/>
            <person name="Brocchi M."/>
            <person name="Burity H.A."/>
            <person name="Camargo A.A."/>
            <person name="Camargo S.S."/>
            <person name="Carepo M.S."/>
            <person name="Carraro D.M."/>
            <person name="de Mattos Cascardo J.C."/>
            <person name="Castro L.A."/>
            <person name="Cavalcanti G."/>
            <person name="Chemale G."/>
            <person name="Collevatti R.G."/>
            <person name="Cunha C.W."/>
            <person name="Dallagiovanna B."/>
            <person name="Dambros B.P."/>
            <person name="Dellagostin O.A."/>
            <person name="Falcao C."/>
            <person name="Fantinatti-Garboggini F."/>
            <person name="Felipe M.S.S."/>
            <person name="Fiorentin L."/>
            <person name="Franco G.R."/>
            <person name="Freitas N.S.A."/>
            <person name="Frias D."/>
            <person name="Grangeiro T.B."/>
            <person name="Grisard E.C."/>
            <person name="Guimaraes C.T."/>
            <person name="Hungria M."/>
            <person name="Jardim S.N."/>
            <person name="Krieger M.A."/>
            <person name="Laurino J.P."/>
            <person name="Lima L.F.A."/>
            <person name="Lopes M.I."/>
            <person name="Loreto E.L.S."/>
            <person name="Madeira H.M.F."/>
            <person name="Manfio G.P."/>
            <person name="Maranhao A.Q."/>
            <person name="Martinkovics C.T."/>
            <person name="Medeiros S.R.B."/>
            <person name="Moreira M.A.M."/>
            <person name="Neiva M."/>
            <person name="Ramalho-Neto C.E."/>
            <person name="Nicolas M.F."/>
            <person name="Oliveira S.C."/>
            <person name="Paixao R.F.C."/>
            <person name="Pedrosa F.O."/>
            <person name="Pena S.D.J."/>
            <person name="Pereira M."/>
            <person name="Pereira-Ferrari L."/>
            <person name="Piffer I."/>
            <person name="Pinto L.S."/>
            <person name="Potrich D.P."/>
            <person name="Salim A.C.M."/>
            <person name="Santos F.R."/>
            <person name="Schmitt R."/>
            <person name="Schneider M.P.C."/>
            <person name="Schrank A."/>
            <person name="Schrank I.S."/>
            <person name="Schuck A.F."/>
            <person name="Seuanez H.N."/>
            <person name="Silva D.W."/>
            <person name="Silva R."/>
            <person name="Silva S.C."/>
            <person name="Soares C.M.A."/>
            <person name="Souza K.R.L."/>
            <person name="Souza R.C."/>
            <person name="Staats C.C."/>
            <person name="Steffens M.B.R."/>
            <person name="Teixeira S.M.R."/>
            <person name="Urmenyi T.P."/>
            <person name="Vainstein M.H."/>
            <person name="Zuccherato L.W."/>
            <person name="Simpson A.J.G."/>
            <person name="Zaha A."/>
        </authorList>
    </citation>
    <scope>NUCLEOTIDE SEQUENCE [LARGE SCALE GENOMIC DNA]</scope>
    <source>
        <strain>J / ATCC 25934 / NCTC 10110</strain>
    </source>
</reference>
<protein>
    <recommendedName>
        <fullName evidence="1">ATP synthase subunit alpha</fullName>
        <ecNumber evidence="1">7.1.2.2</ecNumber>
    </recommendedName>
    <alternativeName>
        <fullName evidence="1">ATP synthase F1 sector subunit alpha</fullName>
    </alternativeName>
    <alternativeName>
        <fullName evidence="1">F-ATPase subunit alpha</fullName>
    </alternativeName>
</protein>
<accession>Q4AAV9</accession>